<name>QUEA_BACC4</name>
<comment type="function">
    <text evidence="1">Transfers and isomerizes the ribose moiety from AdoMet to the 7-aminomethyl group of 7-deazaguanine (preQ1-tRNA) to give epoxyqueuosine (oQ-tRNA).</text>
</comment>
<comment type="catalytic activity">
    <reaction evidence="1">
        <text>7-aminomethyl-7-carbaguanosine(34) in tRNA + S-adenosyl-L-methionine = epoxyqueuosine(34) in tRNA + adenine + L-methionine + 2 H(+)</text>
        <dbReference type="Rhea" id="RHEA:32155"/>
        <dbReference type="Rhea" id="RHEA-COMP:10342"/>
        <dbReference type="Rhea" id="RHEA-COMP:18582"/>
        <dbReference type="ChEBI" id="CHEBI:15378"/>
        <dbReference type="ChEBI" id="CHEBI:16708"/>
        <dbReference type="ChEBI" id="CHEBI:57844"/>
        <dbReference type="ChEBI" id="CHEBI:59789"/>
        <dbReference type="ChEBI" id="CHEBI:82833"/>
        <dbReference type="ChEBI" id="CHEBI:194443"/>
        <dbReference type="EC" id="2.4.99.17"/>
    </reaction>
</comment>
<comment type="pathway">
    <text evidence="1">tRNA modification; tRNA-queuosine biosynthesis.</text>
</comment>
<comment type="subunit">
    <text evidence="1">Monomer.</text>
</comment>
<comment type="subcellular location">
    <subcellularLocation>
        <location evidence="1">Cytoplasm</location>
    </subcellularLocation>
</comment>
<comment type="similarity">
    <text evidence="1">Belongs to the QueA family.</text>
</comment>
<organism>
    <name type="scientific">Bacillus cereus (strain B4264)</name>
    <dbReference type="NCBI Taxonomy" id="405532"/>
    <lineage>
        <taxon>Bacteria</taxon>
        <taxon>Bacillati</taxon>
        <taxon>Bacillota</taxon>
        <taxon>Bacilli</taxon>
        <taxon>Bacillales</taxon>
        <taxon>Bacillaceae</taxon>
        <taxon>Bacillus</taxon>
        <taxon>Bacillus cereus group</taxon>
    </lineage>
</organism>
<reference key="1">
    <citation type="submission" date="2008-10" db="EMBL/GenBank/DDBJ databases">
        <title>Genome sequence of Bacillus cereus B4264.</title>
        <authorList>
            <person name="Dodson R.J."/>
            <person name="Durkin A.S."/>
            <person name="Rosovitz M.J."/>
            <person name="Rasko D.A."/>
            <person name="Hoffmaster A."/>
            <person name="Ravel J."/>
            <person name="Sutton G."/>
        </authorList>
    </citation>
    <scope>NUCLEOTIDE SEQUENCE [LARGE SCALE GENOMIC DNA]</scope>
    <source>
        <strain>B4264</strain>
    </source>
</reference>
<accession>B7HE52</accession>
<evidence type="ECO:0000255" key="1">
    <source>
        <dbReference type="HAMAP-Rule" id="MF_00113"/>
    </source>
</evidence>
<proteinExistence type="inferred from homology"/>
<feature type="chain" id="PRO_1000117525" description="S-adenosylmethionine:tRNA ribosyltransferase-isomerase">
    <location>
        <begin position="1"/>
        <end position="350"/>
    </location>
</feature>
<protein>
    <recommendedName>
        <fullName evidence="1">S-adenosylmethionine:tRNA ribosyltransferase-isomerase</fullName>
        <ecNumber evidence="1">2.4.99.17</ecNumber>
    </recommendedName>
    <alternativeName>
        <fullName evidence="1">Queuosine biosynthesis protein QueA</fullName>
    </alternativeName>
</protein>
<sequence length="350" mass="39471">MDINLFDFHLPEELIAQVPLEDRETSRLMVLDRETGDIEHKHFTDILSYLHEGDCLVLNETKVMPARLHGVKEDTGAHIEVLLLKQEEGDKWETLVKPAKRVKEGTVISFGEGKLKATCTGTADQGGRQLEFSYDGIFYEILDELGEMPLPPYIKETLEDRDRYQTVYAKEIGSAAAPTAGLHFTEELLEKLKQKGVQLAFITLHVGLGTFRPVSADTIEEHHMHAEYYHMSEETAALLNRVKENGGRIITVGTTSTRTLETIATDHDGKLCAASGWTDIFMYPGYEFKAIDGLITNFHLPKSTLIMLVSAFANRDNVLHAYNEAVKEKYRFFSFGDAMFVASHAKMRNK</sequence>
<dbReference type="EC" id="2.4.99.17" evidence="1"/>
<dbReference type="EMBL" id="CP001176">
    <property type="protein sequence ID" value="ACK63990.1"/>
    <property type="molecule type" value="Genomic_DNA"/>
</dbReference>
<dbReference type="RefSeq" id="WP_000354014.1">
    <property type="nucleotide sequence ID" value="NZ_VEHB01000006.1"/>
</dbReference>
<dbReference type="SMR" id="B7HE52"/>
<dbReference type="GeneID" id="72451096"/>
<dbReference type="KEGG" id="bcb:BCB4264_A4537"/>
<dbReference type="HOGENOM" id="CLU_039110_1_0_9"/>
<dbReference type="UniPathway" id="UPA00392"/>
<dbReference type="Proteomes" id="UP000007096">
    <property type="component" value="Chromosome"/>
</dbReference>
<dbReference type="GO" id="GO:0005737">
    <property type="term" value="C:cytoplasm"/>
    <property type="evidence" value="ECO:0007669"/>
    <property type="project" value="UniProtKB-SubCell"/>
</dbReference>
<dbReference type="GO" id="GO:0051075">
    <property type="term" value="F:S-adenosylmethionine:tRNA ribosyltransferase-isomerase activity"/>
    <property type="evidence" value="ECO:0007669"/>
    <property type="project" value="UniProtKB-EC"/>
</dbReference>
<dbReference type="GO" id="GO:0008616">
    <property type="term" value="P:queuosine biosynthetic process"/>
    <property type="evidence" value="ECO:0007669"/>
    <property type="project" value="UniProtKB-UniRule"/>
</dbReference>
<dbReference type="GO" id="GO:0002099">
    <property type="term" value="P:tRNA wobble guanine modification"/>
    <property type="evidence" value="ECO:0007669"/>
    <property type="project" value="TreeGrafter"/>
</dbReference>
<dbReference type="FunFam" id="2.40.10.240:FF:000002">
    <property type="entry name" value="S-adenosylmethionine:tRNA ribosyltransferase-isomerase"/>
    <property type="match status" value="1"/>
</dbReference>
<dbReference type="FunFam" id="3.40.1780.10:FF:000001">
    <property type="entry name" value="S-adenosylmethionine:tRNA ribosyltransferase-isomerase"/>
    <property type="match status" value="1"/>
</dbReference>
<dbReference type="Gene3D" id="2.40.10.240">
    <property type="entry name" value="QueA-like"/>
    <property type="match status" value="1"/>
</dbReference>
<dbReference type="Gene3D" id="3.40.1780.10">
    <property type="entry name" value="QueA-like"/>
    <property type="match status" value="1"/>
</dbReference>
<dbReference type="HAMAP" id="MF_00113">
    <property type="entry name" value="QueA"/>
    <property type="match status" value="1"/>
</dbReference>
<dbReference type="InterPro" id="IPR003699">
    <property type="entry name" value="QueA"/>
</dbReference>
<dbReference type="InterPro" id="IPR042118">
    <property type="entry name" value="QueA_dom1"/>
</dbReference>
<dbReference type="InterPro" id="IPR042119">
    <property type="entry name" value="QueA_dom2"/>
</dbReference>
<dbReference type="InterPro" id="IPR036100">
    <property type="entry name" value="QueA_sf"/>
</dbReference>
<dbReference type="NCBIfam" id="NF001140">
    <property type="entry name" value="PRK00147.1"/>
    <property type="match status" value="1"/>
</dbReference>
<dbReference type="NCBIfam" id="TIGR00113">
    <property type="entry name" value="queA"/>
    <property type="match status" value="1"/>
</dbReference>
<dbReference type="PANTHER" id="PTHR30307">
    <property type="entry name" value="S-ADENOSYLMETHIONINE:TRNA RIBOSYLTRANSFERASE-ISOMERASE"/>
    <property type="match status" value="1"/>
</dbReference>
<dbReference type="PANTHER" id="PTHR30307:SF0">
    <property type="entry name" value="S-ADENOSYLMETHIONINE:TRNA RIBOSYLTRANSFERASE-ISOMERASE"/>
    <property type="match status" value="1"/>
</dbReference>
<dbReference type="Pfam" id="PF02547">
    <property type="entry name" value="Queuosine_synth"/>
    <property type="match status" value="1"/>
</dbReference>
<dbReference type="SUPFAM" id="SSF111337">
    <property type="entry name" value="QueA-like"/>
    <property type="match status" value="1"/>
</dbReference>
<gene>
    <name evidence="1" type="primary">queA</name>
    <name type="ordered locus">BCB4264_A4537</name>
</gene>
<keyword id="KW-0963">Cytoplasm</keyword>
<keyword id="KW-0671">Queuosine biosynthesis</keyword>
<keyword id="KW-0949">S-adenosyl-L-methionine</keyword>
<keyword id="KW-0808">Transferase</keyword>